<evidence type="ECO:0000250" key="1"/>
<evidence type="ECO:0000255" key="2">
    <source>
        <dbReference type="PROSITE-ProRule" id="PRU00465"/>
    </source>
</evidence>
<evidence type="ECO:0000305" key="3"/>
<protein>
    <recommendedName>
        <fullName>2Fe-2S ferredoxin</fullName>
    </recommendedName>
</protein>
<dbReference type="EMBL" id="AE005674">
    <property type="protein sequence ID" value="AAN44071.1"/>
    <property type="molecule type" value="Genomic_DNA"/>
</dbReference>
<dbReference type="EMBL" id="AE014073">
    <property type="protein sequence ID" value="AAP17896.1"/>
    <property type="molecule type" value="Genomic_DNA"/>
</dbReference>
<dbReference type="RefSeq" id="NP_708364.1">
    <property type="nucleotide sequence ID" value="NC_004337.2"/>
</dbReference>
<dbReference type="RefSeq" id="WP_001124469.1">
    <property type="nucleotide sequence ID" value="NZ_WPGW01000021.1"/>
</dbReference>
<dbReference type="BMRB" id="P0A9R6"/>
<dbReference type="SMR" id="P0A9R6"/>
<dbReference type="STRING" id="198214.SF2572"/>
<dbReference type="PaxDb" id="198214-SF2572"/>
<dbReference type="GeneID" id="1025336"/>
<dbReference type="GeneID" id="93774611"/>
<dbReference type="KEGG" id="sfl:SF2572"/>
<dbReference type="KEGG" id="sfx:S2744"/>
<dbReference type="PATRIC" id="fig|198214.7.peg.3071"/>
<dbReference type="HOGENOM" id="CLU_082632_5_2_6"/>
<dbReference type="Proteomes" id="UP000001006">
    <property type="component" value="Chromosome"/>
</dbReference>
<dbReference type="Proteomes" id="UP000002673">
    <property type="component" value="Chromosome"/>
</dbReference>
<dbReference type="GO" id="GO:0005829">
    <property type="term" value="C:cytosol"/>
    <property type="evidence" value="ECO:0007669"/>
    <property type="project" value="TreeGrafter"/>
</dbReference>
<dbReference type="GO" id="GO:0051537">
    <property type="term" value="F:2 iron, 2 sulfur cluster binding"/>
    <property type="evidence" value="ECO:0007669"/>
    <property type="project" value="UniProtKB-KW"/>
</dbReference>
<dbReference type="GO" id="GO:0009055">
    <property type="term" value="F:electron transfer activity"/>
    <property type="evidence" value="ECO:0007669"/>
    <property type="project" value="InterPro"/>
</dbReference>
<dbReference type="GO" id="GO:0046872">
    <property type="term" value="F:metal ion binding"/>
    <property type="evidence" value="ECO:0007669"/>
    <property type="project" value="UniProtKB-KW"/>
</dbReference>
<dbReference type="GO" id="GO:0140647">
    <property type="term" value="P:P450-containing electron transport chain"/>
    <property type="evidence" value="ECO:0007669"/>
    <property type="project" value="InterPro"/>
</dbReference>
<dbReference type="CDD" id="cd00207">
    <property type="entry name" value="fer2"/>
    <property type="match status" value="1"/>
</dbReference>
<dbReference type="FunFam" id="3.10.20.30:FF:000008">
    <property type="entry name" value="Ferredoxin, 2Fe-2S type, ISC system"/>
    <property type="match status" value="1"/>
</dbReference>
<dbReference type="Gene3D" id="3.10.20.30">
    <property type="match status" value="1"/>
</dbReference>
<dbReference type="InterPro" id="IPR036010">
    <property type="entry name" value="2Fe-2S_ferredoxin-like_sf"/>
</dbReference>
<dbReference type="InterPro" id="IPR001041">
    <property type="entry name" value="2Fe-2S_ferredoxin-type"/>
</dbReference>
<dbReference type="InterPro" id="IPR001055">
    <property type="entry name" value="Adrenodoxin-like"/>
</dbReference>
<dbReference type="InterPro" id="IPR018298">
    <property type="entry name" value="Adrenodoxin_Fe-S_BS"/>
</dbReference>
<dbReference type="InterPro" id="IPR012675">
    <property type="entry name" value="Beta-grasp_dom_sf"/>
</dbReference>
<dbReference type="InterPro" id="IPR011536">
    <property type="entry name" value="Fdx_isc"/>
</dbReference>
<dbReference type="NCBIfam" id="TIGR02007">
    <property type="entry name" value="fdx_isc"/>
    <property type="match status" value="1"/>
</dbReference>
<dbReference type="PANTHER" id="PTHR23426:SF65">
    <property type="entry name" value="FERREDOXIN-2, MITOCHONDRIAL"/>
    <property type="match status" value="1"/>
</dbReference>
<dbReference type="PANTHER" id="PTHR23426">
    <property type="entry name" value="FERREDOXIN/ADRENODOXIN"/>
    <property type="match status" value="1"/>
</dbReference>
<dbReference type="Pfam" id="PF00111">
    <property type="entry name" value="Fer2"/>
    <property type="match status" value="1"/>
</dbReference>
<dbReference type="PRINTS" id="PR00355">
    <property type="entry name" value="ADRENODOXIN"/>
</dbReference>
<dbReference type="SUPFAM" id="SSF54292">
    <property type="entry name" value="2Fe-2S ferredoxin-like"/>
    <property type="match status" value="1"/>
</dbReference>
<dbReference type="PROSITE" id="PS51085">
    <property type="entry name" value="2FE2S_FER_2"/>
    <property type="match status" value="1"/>
</dbReference>
<dbReference type="PROSITE" id="PS00814">
    <property type="entry name" value="ADX"/>
    <property type="match status" value="1"/>
</dbReference>
<comment type="function">
    <text evidence="1">Ferredoxin are iron-sulfur proteins that transfer electrons in a wide variety of metabolic reactions. Although the function of this ferredoxin is unknown it is probable that it has a role as a cellular electron transfer protein. Involved in the in vivo assembly of the Fe-S clusters in a wide variety of iron-sulfur proteins (By similarity).</text>
</comment>
<comment type="cofactor">
    <cofactor evidence="1">
        <name>[2Fe-2S] cluster</name>
        <dbReference type="ChEBI" id="CHEBI:190135"/>
    </cofactor>
    <text evidence="1">Binds 1 [2Fe-2S] cluster.</text>
</comment>
<comment type="similarity">
    <text evidence="3">Belongs to the adrenodoxin/putidaredoxin family.</text>
</comment>
<accession>P0A9R6</accession>
<accession>P25528</accession>
<gene>
    <name type="primary">fdx</name>
    <name type="ordered locus">SF2572</name>
    <name type="ordered locus">S2744</name>
</gene>
<sequence>MPKIVILPHQDLCPDGAVLEANSGETILDAALRNGIEIEHACEKSCACTTCHCIVREGFDSLPESSEQEDDMLDKAWGLEPESRLSCQARVTDEDLVVEIPRYTINHAREH</sequence>
<reference key="1">
    <citation type="journal article" date="2002" name="Nucleic Acids Res.">
        <title>Genome sequence of Shigella flexneri 2a: insights into pathogenicity through comparison with genomes of Escherichia coli K12 and O157.</title>
        <authorList>
            <person name="Jin Q."/>
            <person name="Yuan Z."/>
            <person name="Xu J."/>
            <person name="Wang Y."/>
            <person name="Shen Y."/>
            <person name="Lu W."/>
            <person name="Wang J."/>
            <person name="Liu H."/>
            <person name="Yang J."/>
            <person name="Yang F."/>
            <person name="Zhang X."/>
            <person name="Zhang J."/>
            <person name="Yang G."/>
            <person name="Wu H."/>
            <person name="Qu D."/>
            <person name="Dong J."/>
            <person name="Sun L."/>
            <person name="Xue Y."/>
            <person name="Zhao A."/>
            <person name="Gao Y."/>
            <person name="Zhu J."/>
            <person name="Kan B."/>
            <person name="Ding K."/>
            <person name="Chen S."/>
            <person name="Cheng H."/>
            <person name="Yao Z."/>
            <person name="He B."/>
            <person name="Chen R."/>
            <person name="Ma D."/>
            <person name="Qiang B."/>
            <person name="Wen Y."/>
            <person name="Hou Y."/>
            <person name="Yu J."/>
        </authorList>
    </citation>
    <scope>NUCLEOTIDE SEQUENCE [LARGE SCALE GENOMIC DNA]</scope>
    <source>
        <strain>301 / Serotype 2a</strain>
    </source>
</reference>
<reference key="2">
    <citation type="journal article" date="2003" name="Infect. Immun.">
        <title>Complete genome sequence and comparative genomics of Shigella flexneri serotype 2a strain 2457T.</title>
        <authorList>
            <person name="Wei J."/>
            <person name="Goldberg M.B."/>
            <person name="Burland V."/>
            <person name="Venkatesan M.M."/>
            <person name="Deng W."/>
            <person name="Fournier G."/>
            <person name="Mayhew G.F."/>
            <person name="Plunkett G. III"/>
            <person name="Rose D.J."/>
            <person name="Darling A."/>
            <person name="Mau B."/>
            <person name="Perna N.T."/>
            <person name="Payne S.M."/>
            <person name="Runyen-Janecky L.J."/>
            <person name="Zhou S."/>
            <person name="Schwartz D.C."/>
            <person name="Blattner F.R."/>
        </authorList>
    </citation>
    <scope>NUCLEOTIDE SEQUENCE [LARGE SCALE GENOMIC DNA]</scope>
    <source>
        <strain>ATCC 700930 / 2457T / Serotype 2a</strain>
    </source>
</reference>
<proteinExistence type="inferred from homology"/>
<keyword id="KW-0001">2Fe-2S</keyword>
<keyword id="KW-0249">Electron transport</keyword>
<keyword id="KW-0408">Iron</keyword>
<keyword id="KW-0411">Iron-sulfur</keyword>
<keyword id="KW-0479">Metal-binding</keyword>
<keyword id="KW-1185">Reference proteome</keyword>
<keyword id="KW-0813">Transport</keyword>
<name>FER_SHIFL</name>
<organism>
    <name type="scientific">Shigella flexneri</name>
    <dbReference type="NCBI Taxonomy" id="623"/>
    <lineage>
        <taxon>Bacteria</taxon>
        <taxon>Pseudomonadati</taxon>
        <taxon>Pseudomonadota</taxon>
        <taxon>Gammaproteobacteria</taxon>
        <taxon>Enterobacterales</taxon>
        <taxon>Enterobacteriaceae</taxon>
        <taxon>Shigella</taxon>
    </lineage>
</organism>
<feature type="initiator methionine" description="Removed" evidence="1">
    <location>
        <position position="1"/>
    </location>
</feature>
<feature type="chain" id="PRO_0000201170" description="2Fe-2S ferredoxin">
    <location>
        <begin position="2"/>
        <end position="111"/>
    </location>
</feature>
<feature type="domain" description="2Fe-2S ferredoxin-type" evidence="2">
    <location>
        <begin position="2"/>
        <end position="104"/>
    </location>
</feature>
<feature type="binding site" evidence="2">
    <location>
        <position position="42"/>
    </location>
    <ligand>
        <name>[2Fe-2S] cluster</name>
        <dbReference type="ChEBI" id="CHEBI:190135"/>
    </ligand>
</feature>
<feature type="binding site" evidence="2">
    <location>
        <position position="48"/>
    </location>
    <ligand>
        <name>[2Fe-2S] cluster</name>
        <dbReference type="ChEBI" id="CHEBI:190135"/>
    </ligand>
</feature>
<feature type="binding site" evidence="2">
    <location>
        <position position="51"/>
    </location>
    <ligand>
        <name>[2Fe-2S] cluster</name>
        <dbReference type="ChEBI" id="CHEBI:190135"/>
    </ligand>
</feature>
<feature type="binding site" evidence="2">
    <location>
        <position position="87"/>
    </location>
    <ligand>
        <name>[2Fe-2S] cluster</name>
        <dbReference type="ChEBI" id="CHEBI:190135"/>
    </ligand>
</feature>